<keyword id="KW-0997">Cell inner membrane</keyword>
<keyword id="KW-1003">Cell membrane</keyword>
<keyword id="KW-0378">Hydrolase</keyword>
<keyword id="KW-0472">Membrane</keyword>
<keyword id="KW-0479">Metal-binding</keyword>
<keyword id="KW-0482">Metalloprotease</keyword>
<keyword id="KW-0645">Protease</keyword>
<keyword id="KW-0812">Transmembrane</keyword>
<keyword id="KW-1133">Transmembrane helix</keyword>
<keyword id="KW-0862">Zinc</keyword>
<reference key="1">
    <citation type="submission" date="2007-05" db="EMBL/GenBank/DDBJ databases">
        <title>Complete sequence of Pseudomonas putida F1.</title>
        <authorList>
            <consortium name="US DOE Joint Genome Institute"/>
            <person name="Copeland A."/>
            <person name="Lucas S."/>
            <person name="Lapidus A."/>
            <person name="Barry K."/>
            <person name="Detter J.C."/>
            <person name="Glavina del Rio T."/>
            <person name="Hammon N."/>
            <person name="Israni S."/>
            <person name="Dalin E."/>
            <person name="Tice H."/>
            <person name="Pitluck S."/>
            <person name="Chain P."/>
            <person name="Malfatti S."/>
            <person name="Shin M."/>
            <person name="Vergez L."/>
            <person name="Schmutz J."/>
            <person name="Larimer F."/>
            <person name="Land M."/>
            <person name="Hauser L."/>
            <person name="Kyrpides N."/>
            <person name="Lykidis A."/>
            <person name="Parales R."/>
            <person name="Richardson P."/>
        </authorList>
    </citation>
    <scope>NUCLEOTIDE SEQUENCE [LARGE SCALE GENOMIC DNA]</scope>
    <source>
        <strain>ATCC 700007 / DSM 6899 / JCM 31910 / BCRC 17059 / LMG 24140 / F1</strain>
    </source>
</reference>
<name>HTPX_PSEP1</name>
<dbReference type="EC" id="3.4.24.-" evidence="1"/>
<dbReference type="EMBL" id="CP000712">
    <property type="protein sequence ID" value="ABQ79968.1"/>
    <property type="molecule type" value="Genomic_DNA"/>
</dbReference>
<dbReference type="SMR" id="A5W758"/>
<dbReference type="MEROPS" id="M48.002"/>
<dbReference type="KEGG" id="ppf:Pput_3844"/>
<dbReference type="eggNOG" id="COG0501">
    <property type="taxonomic scope" value="Bacteria"/>
</dbReference>
<dbReference type="HOGENOM" id="CLU_042266_1_0_6"/>
<dbReference type="GO" id="GO:0005886">
    <property type="term" value="C:plasma membrane"/>
    <property type="evidence" value="ECO:0007669"/>
    <property type="project" value="UniProtKB-SubCell"/>
</dbReference>
<dbReference type="GO" id="GO:0004222">
    <property type="term" value="F:metalloendopeptidase activity"/>
    <property type="evidence" value="ECO:0007669"/>
    <property type="project" value="UniProtKB-UniRule"/>
</dbReference>
<dbReference type="GO" id="GO:0008270">
    <property type="term" value="F:zinc ion binding"/>
    <property type="evidence" value="ECO:0007669"/>
    <property type="project" value="UniProtKB-UniRule"/>
</dbReference>
<dbReference type="GO" id="GO:0006508">
    <property type="term" value="P:proteolysis"/>
    <property type="evidence" value="ECO:0007669"/>
    <property type="project" value="UniProtKB-KW"/>
</dbReference>
<dbReference type="CDD" id="cd07335">
    <property type="entry name" value="M48B_HtpX_like"/>
    <property type="match status" value="1"/>
</dbReference>
<dbReference type="Gene3D" id="3.30.2010.10">
    <property type="entry name" value="Metalloproteases ('zincins'), catalytic domain"/>
    <property type="match status" value="1"/>
</dbReference>
<dbReference type="HAMAP" id="MF_00188">
    <property type="entry name" value="Pept_M48_protease_HtpX"/>
    <property type="match status" value="1"/>
</dbReference>
<dbReference type="InterPro" id="IPR050083">
    <property type="entry name" value="HtpX_protease"/>
</dbReference>
<dbReference type="InterPro" id="IPR022919">
    <property type="entry name" value="Pept_M48_protease_HtpX"/>
</dbReference>
<dbReference type="InterPro" id="IPR001915">
    <property type="entry name" value="Peptidase_M48"/>
</dbReference>
<dbReference type="NCBIfam" id="NF003965">
    <property type="entry name" value="PRK05457.1"/>
    <property type="match status" value="1"/>
</dbReference>
<dbReference type="PANTHER" id="PTHR43221">
    <property type="entry name" value="PROTEASE HTPX"/>
    <property type="match status" value="1"/>
</dbReference>
<dbReference type="PANTHER" id="PTHR43221:SF1">
    <property type="entry name" value="PROTEASE HTPX"/>
    <property type="match status" value="1"/>
</dbReference>
<dbReference type="Pfam" id="PF01435">
    <property type="entry name" value="Peptidase_M48"/>
    <property type="match status" value="1"/>
</dbReference>
<sequence>MMRILLFVATNLAVVLVASITLSLFGFNGFMAANGVDLNLSSLLVFCAVFGFAGSLVSLFISKWMAKMTTGTQIISQPRTRHEQWLLQTVEELSREAGIKMPEVGIFPAYEANAFATGWNRNDALVAVSQGLLERFSPDEVRAVLAHEIGHVANGDMVTLALVQGVVNTFVMFFARIIGNFVDKVIFKNEEGQGIAYYVATIVAELILGILASMIVMWFSRRREFRADEAGAQLAGTAAMIGALQRLRVEQGLPVHMPDTMKAFGINGGLKHGLAGLLMSHPPLEERIEALRRRG</sequence>
<comment type="cofactor">
    <cofactor evidence="1">
        <name>Zn(2+)</name>
        <dbReference type="ChEBI" id="CHEBI:29105"/>
    </cofactor>
    <text evidence="1">Binds 1 zinc ion per subunit.</text>
</comment>
<comment type="subcellular location">
    <subcellularLocation>
        <location evidence="1">Cell inner membrane</location>
        <topology evidence="1">Multi-pass membrane protein</topology>
    </subcellularLocation>
</comment>
<comment type="similarity">
    <text evidence="1">Belongs to the peptidase M48B family.</text>
</comment>
<accession>A5W758</accession>
<proteinExistence type="inferred from homology"/>
<gene>
    <name evidence="1" type="primary">htpX</name>
    <name type="ordered locus">Pput_3844</name>
</gene>
<evidence type="ECO:0000255" key="1">
    <source>
        <dbReference type="HAMAP-Rule" id="MF_00188"/>
    </source>
</evidence>
<organism>
    <name type="scientific">Pseudomonas putida (strain ATCC 700007 / DSM 6899 / JCM 31910 / BCRC 17059 / LMG 24140 / F1)</name>
    <dbReference type="NCBI Taxonomy" id="351746"/>
    <lineage>
        <taxon>Bacteria</taxon>
        <taxon>Pseudomonadati</taxon>
        <taxon>Pseudomonadota</taxon>
        <taxon>Gammaproteobacteria</taxon>
        <taxon>Pseudomonadales</taxon>
        <taxon>Pseudomonadaceae</taxon>
        <taxon>Pseudomonas</taxon>
    </lineage>
</organism>
<protein>
    <recommendedName>
        <fullName evidence="1">Protease HtpX</fullName>
        <ecNumber evidence="1">3.4.24.-</ecNumber>
    </recommendedName>
    <alternativeName>
        <fullName evidence="1">Heat shock protein HtpX</fullName>
    </alternativeName>
</protein>
<feature type="chain" id="PRO_1000058468" description="Protease HtpX">
    <location>
        <begin position="1"/>
        <end position="295"/>
    </location>
</feature>
<feature type="transmembrane region" description="Helical" evidence="1">
    <location>
        <begin position="4"/>
        <end position="24"/>
    </location>
</feature>
<feature type="transmembrane region" description="Helical" evidence="1">
    <location>
        <begin position="41"/>
        <end position="61"/>
    </location>
</feature>
<feature type="transmembrane region" description="Helical" evidence="1">
    <location>
        <begin position="158"/>
        <end position="178"/>
    </location>
</feature>
<feature type="transmembrane region" description="Helical" evidence="1">
    <location>
        <begin position="199"/>
        <end position="219"/>
    </location>
</feature>
<feature type="active site" evidence="1">
    <location>
        <position position="148"/>
    </location>
</feature>
<feature type="binding site" evidence="1">
    <location>
        <position position="147"/>
    </location>
    <ligand>
        <name>Zn(2+)</name>
        <dbReference type="ChEBI" id="CHEBI:29105"/>
        <note>catalytic</note>
    </ligand>
</feature>
<feature type="binding site" evidence="1">
    <location>
        <position position="151"/>
    </location>
    <ligand>
        <name>Zn(2+)</name>
        <dbReference type="ChEBI" id="CHEBI:29105"/>
        <note>catalytic</note>
    </ligand>
</feature>
<feature type="binding site" evidence="1">
    <location>
        <position position="224"/>
    </location>
    <ligand>
        <name>Zn(2+)</name>
        <dbReference type="ChEBI" id="CHEBI:29105"/>
        <note>catalytic</note>
    </ligand>
</feature>